<protein>
    <recommendedName>
        <fullName>Myosin IA heavy chain</fullName>
    </recommendedName>
    <alternativeName>
        <fullName>Myosin-like protein abmA</fullName>
    </alternativeName>
</protein>
<dbReference type="EMBL" id="S73909">
    <property type="protein sequence ID" value="AAB20711.1"/>
    <property type="molecule type" value="Genomic_DNA"/>
</dbReference>
<dbReference type="EMBL" id="AAFI02000035">
    <property type="protein sequence ID" value="EAL67246.1"/>
    <property type="molecule type" value="Genomic_DNA"/>
</dbReference>
<dbReference type="RefSeq" id="XP_641363.1">
    <property type="nucleotide sequence ID" value="XM_636271.1"/>
</dbReference>
<dbReference type="SMR" id="P22467"/>
<dbReference type="FunCoup" id="P22467">
    <property type="interactions" value="6"/>
</dbReference>
<dbReference type="STRING" id="44689.P22467"/>
<dbReference type="PaxDb" id="44689-DDB0215392"/>
<dbReference type="EnsemblProtists" id="EAL67246">
    <property type="protein sequence ID" value="EAL67246"/>
    <property type="gene ID" value="DDB_G0280039"/>
</dbReference>
<dbReference type="GeneID" id="8622497"/>
<dbReference type="KEGG" id="ddi:DDB_G0280039"/>
<dbReference type="dictyBase" id="DDB_G0280039">
    <property type="gene designation" value="myoA"/>
</dbReference>
<dbReference type="VEuPathDB" id="AmoebaDB:DDB_G0280039"/>
<dbReference type="eggNOG" id="KOG0162">
    <property type="taxonomic scope" value="Eukaryota"/>
</dbReference>
<dbReference type="HOGENOM" id="CLU_000192_7_7_1"/>
<dbReference type="InParanoid" id="P22467"/>
<dbReference type="OMA" id="SSCIEIF"/>
<dbReference type="PhylomeDB" id="P22467"/>
<dbReference type="PRO" id="PR:P22467"/>
<dbReference type="Proteomes" id="UP000002195">
    <property type="component" value="Chromosome 3"/>
</dbReference>
<dbReference type="GO" id="GO:0015629">
    <property type="term" value="C:actin cytoskeleton"/>
    <property type="evidence" value="ECO:0000314"/>
    <property type="project" value="dictyBase"/>
</dbReference>
<dbReference type="GO" id="GO:0031252">
    <property type="term" value="C:cell leading edge"/>
    <property type="evidence" value="ECO:0000314"/>
    <property type="project" value="dictyBase"/>
</dbReference>
<dbReference type="GO" id="GO:0005911">
    <property type="term" value="C:cell-cell junction"/>
    <property type="evidence" value="ECO:0000314"/>
    <property type="project" value="dictyBase"/>
</dbReference>
<dbReference type="GO" id="GO:0005737">
    <property type="term" value="C:cytoplasm"/>
    <property type="evidence" value="ECO:0000318"/>
    <property type="project" value="GO_Central"/>
</dbReference>
<dbReference type="GO" id="GO:0005829">
    <property type="term" value="C:cytosol"/>
    <property type="evidence" value="ECO:0000314"/>
    <property type="project" value="dictyBase"/>
</dbReference>
<dbReference type="GO" id="GO:0016459">
    <property type="term" value="C:myosin complex"/>
    <property type="evidence" value="ECO:0007669"/>
    <property type="project" value="UniProtKB-KW"/>
</dbReference>
<dbReference type="GO" id="GO:0005886">
    <property type="term" value="C:plasma membrane"/>
    <property type="evidence" value="ECO:0000314"/>
    <property type="project" value="dictyBase"/>
</dbReference>
<dbReference type="GO" id="GO:0031143">
    <property type="term" value="C:pseudopodium"/>
    <property type="evidence" value="ECO:0000314"/>
    <property type="project" value="dictyBase"/>
</dbReference>
<dbReference type="GO" id="GO:0051015">
    <property type="term" value="F:actin filament binding"/>
    <property type="evidence" value="ECO:0000318"/>
    <property type="project" value="GO_Central"/>
</dbReference>
<dbReference type="GO" id="GO:0005524">
    <property type="term" value="F:ATP binding"/>
    <property type="evidence" value="ECO:0007669"/>
    <property type="project" value="UniProtKB-KW"/>
</dbReference>
<dbReference type="GO" id="GO:0005516">
    <property type="term" value="F:calmodulin binding"/>
    <property type="evidence" value="ECO:0000314"/>
    <property type="project" value="dictyBase"/>
</dbReference>
<dbReference type="GO" id="GO:0000146">
    <property type="term" value="F:microfilament motor activity"/>
    <property type="evidence" value="ECO:0000314"/>
    <property type="project" value="dictyBase"/>
</dbReference>
<dbReference type="GO" id="GO:0030036">
    <property type="term" value="P:actin cytoskeleton organization"/>
    <property type="evidence" value="ECO:0000316"/>
    <property type="project" value="dictyBase"/>
</dbReference>
<dbReference type="GO" id="GO:0007015">
    <property type="term" value="P:actin filament organization"/>
    <property type="evidence" value="ECO:0000318"/>
    <property type="project" value="GO_Central"/>
</dbReference>
<dbReference type="GO" id="GO:0031152">
    <property type="term" value="P:aggregation involved in sorocarp development"/>
    <property type="evidence" value="ECO:0000316"/>
    <property type="project" value="dictyBase"/>
</dbReference>
<dbReference type="GO" id="GO:0048870">
    <property type="term" value="P:cell motility"/>
    <property type="evidence" value="ECO:0000315"/>
    <property type="project" value="dictyBase"/>
</dbReference>
<dbReference type="GO" id="GO:0043327">
    <property type="term" value="P:chemotaxis to cAMP"/>
    <property type="evidence" value="ECO:0000315"/>
    <property type="project" value="dictyBase"/>
</dbReference>
<dbReference type="GO" id="GO:0006897">
    <property type="term" value="P:endocytosis"/>
    <property type="evidence" value="ECO:0000318"/>
    <property type="project" value="GO_Central"/>
</dbReference>
<dbReference type="GO" id="GO:0016197">
    <property type="term" value="P:endosomal transport"/>
    <property type="evidence" value="ECO:0000316"/>
    <property type="project" value="dictyBase"/>
</dbReference>
<dbReference type="GO" id="GO:0120320">
    <property type="term" value="P:lateral pseudopodium retraction"/>
    <property type="evidence" value="ECO:0000315"/>
    <property type="project" value="dictyBase"/>
</dbReference>
<dbReference type="GO" id="GO:0006907">
    <property type="term" value="P:pinocytosis"/>
    <property type="evidence" value="ECO:0000316"/>
    <property type="project" value="dictyBase"/>
</dbReference>
<dbReference type="GO" id="GO:0051707">
    <property type="term" value="P:response to other organism"/>
    <property type="evidence" value="ECO:0000304"/>
    <property type="project" value="dictyBase"/>
</dbReference>
<dbReference type="CDD" id="cd01378">
    <property type="entry name" value="MYSc_Myo1"/>
    <property type="match status" value="1"/>
</dbReference>
<dbReference type="FunFam" id="1.10.10.820:FF:000001">
    <property type="entry name" value="Myosin heavy chain"/>
    <property type="match status" value="1"/>
</dbReference>
<dbReference type="FunFam" id="3.40.850.10:FF:000101">
    <property type="entry name" value="Slow myosin heavy chain 2"/>
    <property type="match status" value="1"/>
</dbReference>
<dbReference type="FunFam" id="1.20.58.530:FF:000004">
    <property type="entry name" value="Unconventional myosin ID"/>
    <property type="match status" value="1"/>
</dbReference>
<dbReference type="Gene3D" id="1.10.10.820">
    <property type="match status" value="1"/>
</dbReference>
<dbReference type="Gene3D" id="1.20.5.190">
    <property type="match status" value="1"/>
</dbReference>
<dbReference type="Gene3D" id="1.20.58.530">
    <property type="match status" value="1"/>
</dbReference>
<dbReference type="Gene3D" id="6.20.240.20">
    <property type="match status" value="1"/>
</dbReference>
<dbReference type="Gene3D" id="3.40.850.10">
    <property type="entry name" value="Kinesin motor domain"/>
    <property type="match status" value="1"/>
</dbReference>
<dbReference type="Gene3D" id="1.20.120.720">
    <property type="entry name" value="Myosin VI head, motor domain, U50 subdomain"/>
    <property type="match status" value="1"/>
</dbReference>
<dbReference type="InterPro" id="IPR000048">
    <property type="entry name" value="IQ_motif_EF-hand-BS"/>
</dbReference>
<dbReference type="InterPro" id="IPR036961">
    <property type="entry name" value="Kinesin_motor_dom_sf"/>
</dbReference>
<dbReference type="InterPro" id="IPR001609">
    <property type="entry name" value="Myosin_head_motor_dom-like"/>
</dbReference>
<dbReference type="InterPro" id="IPR010926">
    <property type="entry name" value="Myosin_TH1"/>
</dbReference>
<dbReference type="InterPro" id="IPR036072">
    <property type="entry name" value="MYSc_Myo1"/>
</dbReference>
<dbReference type="InterPro" id="IPR027417">
    <property type="entry name" value="P-loop_NTPase"/>
</dbReference>
<dbReference type="PANTHER" id="PTHR13140">
    <property type="entry name" value="MYOSIN"/>
    <property type="match status" value="1"/>
</dbReference>
<dbReference type="PANTHER" id="PTHR13140:SF655">
    <property type="entry name" value="MYOSIN IA HEAVY CHAIN"/>
    <property type="match status" value="1"/>
</dbReference>
<dbReference type="Pfam" id="PF00612">
    <property type="entry name" value="IQ"/>
    <property type="match status" value="2"/>
</dbReference>
<dbReference type="Pfam" id="PF00063">
    <property type="entry name" value="Myosin_head"/>
    <property type="match status" value="1"/>
</dbReference>
<dbReference type="Pfam" id="PF06017">
    <property type="entry name" value="Myosin_TH1"/>
    <property type="match status" value="1"/>
</dbReference>
<dbReference type="PRINTS" id="PR00193">
    <property type="entry name" value="MYOSINHEAVY"/>
</dbReference>
<dbReference type="SMART" id="SM00015">
    <property type="entry name" value="IQ"/>
    <property type="match status" value="2"/>
</dbReference>
<dbReference type="SMART" id="SM00242">
    <property type="entry name" value="MYSc"/>
    <property type="match status" value="1"/>
</dbReference>
<dbReference type="SUPFAM" id="SSF52540">
    <property type="entry name" value="P-loop containing nucleoside triphosphate hydrolases"/>
    <property type="match status" value="1"/>
</dbReference>
<dbReference type="PROSITE" id="PS50096">
    <property type="entry name" value="IQ"/>
    <property type="match status" value="1"/>
</dbReference>
<dbReference type="PROSITE" id="PS51456">
    <property type="entry name" value="MYOSIN_MOTOR"/>
    <property type="match status" value="1"/>
</dbReference>
<dbReference type="PROSITE" id="PS51757">
    <property type="entry name" value="TH1"/>
    <property type="match status" value="1"/>
</dbReference>
<gene>
    <name type="primary">myoA</name>
    <name type="synonym">abmA</name>
    <name type="synonym">dmiA</name>
    <name type="ORF">DDB_G0280039</name>
</gene>
<sequence length="994" mass="113360">MATFKRDLTKNVGVEDLIMLTEVSESSLHENLKIRYKEGLIYTSIGPVLVSMNPYKQLGIYGNDQINLYKGKHEFEIPPHIYSIADKAYRALRSEGENQCIIISGESGAGKTEASKYIMQYIASITGSSTEVERVKKTILESNPLLEAFGNAKTLRNNNSSRFGKYMEIQFNLGGDPEGGKITNYLLEKSRVINQTQGERNFHIFYQLLKGSSEEEKKTYNLLSPDQYHYLTRNASNGCFTADGIDDQIGFKQTKNAMKVVGIDEPLQKEIFATLSAILLLGNLSFNKSASGNGSVISDKKLANTIASLMGVDAIVLESSLVSRQISTGQGARISTYSVPQTVEQAMYARDAFAKATYSKLFDFIVRKINQSIEVKTIGKVIGVLDIYGFEIFENNSFEQFCINYVNETLQQIFIDLTLKTEQEEYVQEGITWIPVQYINNKACVDLIEKKPIGILSLLDEECLFPEGNDQTMIDKLNKHFSNHTHYSKVERQKNSQFIINHYAGKVFYNIDGFLDKNRDTLFNDLVTLATSSSCSLLVEIFKYVPPLEVDPEQEKKNRDKFSKNGFANNAAKTFIPTDKKRPITAGFQFKNQVTSLLKSLYSCSPHYVRCIKPNSNMRALEWDQSKCAEQVAYLGLFENLLVRRAGYCYRQTFSKFMRRYYMIGKSTWPKWSGDAEKGVNLLMGELTQEINIKEEVQYGKTKIFIRNPQPLFLLEDKRNKRLNDLATKIGSVWKMYKQRKWYLRTLAAIKIQRTYRGWLLVRECVKLKNQSISIFQNNKERNRQSIKLSKAAFIGDFLSLTRDNYTTATLKREEGPNAVLQLSLNVSKVSRHHKIQKRSLLVTNETIFTITPHKPKKDGSWFAIKRKVPFSAIEKISFSKLSDDFFVIHIINEHDLCLETNKKTVLITLLSNLYSKHLNGKELVFEFKDSIQYRNQKGPSELKFVKVDSIHEKSSNSPQANSPSFTAKAEKNYLKVCVLPGLSSESKSILIEK</sequence>
<comment type="function">
    <text>Actin-based motor protein, possibly involved in a wide range of motile processes, such as cell movement across a surface, and extension and retraction of pseudopodia or lamellipodia.</text>
</comment>
<comment type="subunit">
    <text>Myosin I heavy chain is single-headed. Dimer of a heavy and a light chain. Inability to self-assemble into filaments.</text>
</comment>
<comment type="similarity">
    <text evidence="5">Belongs to the TRAFAC class myosin-kinesin ATPase superfamily. Myosin family.</text>
</comment>
<reference key="1">
    <citation type="journal article" date="1989" name="Cell Regul.">
        <title>Multiple actin-based motor genes in Dictyostelium.</title>
        <authorList>
            <person name="Titus M.A."/>
            <person name="Warrick H.M."/>
            <person name="Spudich J.A."/>
        </authorList>
    </citation>
    <scope>NUCLEOTIDE SEQUENCE [GENOMIC DNA]</scope>
    <source>
        <strain>A5-2</strain>
    </source>
</reference>
<reference key="2">
    <citation type="journal article" date="2005" name="Nature">
        <title>The genome of the social amoeba Dictyostelium discoideum.</title>
        <authorList>
            <person name="Eichinger L."/>
            <person name="Pachebat J.A."/>
            <person name="Gloeckner G."/>
            <person name="Rajandream M.A."/>
            <person name="Sucgang R."/>
            <person name="Berriman M."/>
            <person name="Song J."/>
            <person name="Olsen R."/>
            <person name="Szafranski K."/>
            <person name="Xu Q."/>
            <person name="Tunggal B."/>
            <person name="Kummerfeld S."/>
            <person name="Madera M."/>
            <person name="Konfortov B.A."/>
            <person name="Rivero F."/>
            <person name="Bankier A.T."/>
            <person name="Lehmann R."/>
            <person name="Hamlin N."/>
            <person name="Davies R."/>
            <person name="Gaudet P."/>
            <person name="Fey P."/>
            <person name="Pilcher K."/>
            <person name="Chen G."/>
            <person name="Saunders D."/>
            <person name="Sodergren E.J."/>
            <person name="Davis P."/>
            <person name="Kerhornou A."/>
            <person name="Nie X."/>
            <person name="Hall N."/>
            <person name="Anjard C."/>
            <person name="Hemphill L."/>
            <person name="Bason N."/>
            <person name="Farbrother P."/>
            <person name="Desany B."/>
            <person name="Just E."/>
            <person name="Morio T."/>
            <person name="Rost R."/>
            <person name="Churcher C.M."/>
            <person name="Cooper J."/>
            <person name="Haydock S."/>
            <person name="van Driessche N."/>
            <person name="Cronin A."/>
            <person name="Goodhead I."/>
            <person name="Muzny D.M."/>
            <person name="Mourier T."/>
            <person name="Pain A."/>
            <person name="Lu M."/>
            <person name="Harper D."/>
            <person name="Lindsay R."/>
            <person name="Hauser H."/>
            <person name="James K.D."/>
            <person name="Quiles M."/>
            <person name="Madan Babu M."/>
            <person name="Saito T."/>
            <person name="Buchrieser C."/>
            <person name="Wardroper A."/>
            <person name="Felder M."/>
            <person name="Thangavelu M."/>
            <person name="Johnson D."/>
            <person name="Knights A."/>
            <person name="Loulseged H."/>
            <person name="Mungall K.L."/>
            <person name="Oliver K."/>
            <person name="Price C."/>
            <person name="Quail M.A."/>
            <person name="Urushihara H."/>
            <person name="Hernandez J."/>
            <person name="Rabbinowitsch E."/>
            <person name="Steffen D."/>
            <person name="Sanders M."/>
            <person name="Ma J."/>
            <person name="Kohara Y."/>
            <person name="Sharp S."/>
            <person name="Simmonds M.N."/>
            <person name="Spiegler S."/>
            <person name="Tivey A."/>
            <person name="Sugano S."/>
            <person name="White B."/>
            <person name="Walker D."/>
            <person name="Woodward J.R."/>
            <person name="Winckler T."/>
            <person name="Tanaka Y."/>
            <person name="Shaulsky G."/>
            <person name="Schleicher M."/>
            <person name="Weinstock G.M."/>
            <person name="Rosenthal A."/>
            <person name="Cox E.C."/>
            <person name="Chisholm R.L."/>
            <person name="Gibbs R.A."/>
            <person name="Loomis W.F."/>
            <person name="Platzer M."/>
            <person name="Kay R.R."/>
            <person name="Williams J.G."/>
            <person name="Dear P.H."/>
            <person name="Noegel A.A."/>
            <person name="Barrell B.G."/>
            <person name="Kuspa A."/>
        </authorList>
    </citation>
    <scope>NUCLEOTIDE SEQUENCE [LARGE SCALE GENOMIC DNA]</scope>
    <source>
        <strain>AX4</strain>
    </source>
</reference>
<reference key="3">
    <citation type="journal article" date="2006" name="BMC Genomics">
        <title>Thirteen is enough: the myosins of Dictyostelium discoideum and their light chains.</title>
        <authorList>
            <person name="Kollmar M."/>
        </authorList>
    </citation>
    <scope>NOMENCLATURE</scope>
</reference>
<evidence type="ECO:0000255" key="1"/>
<evidence type="ECO:0000255" key="2">
    <source>
        <dbReference type="PROSITE-ProRule" id="PRU00116"/>
    </source>
</evidence>
<evidence type="ECO:0000255" key="3">
    <source>
        <dbReference type="PROSITE-ProRule" id="PRU00782"/>
    </source>
</evidence>
<evidence type="ECO:0000255" key="4">
    <source>
        <dbReference type="PROSITE-ProRule" id="PRU01093"/>
    </source>
</evidence>
<evidence type="ECO:0000305" key="5"/>
<name>MYOA_DICDI</name>
<feature type="chain" id="PRO_0000123365" description="Myosin IA heavy chain">
    <location>
        <begin position="1"/>
        <end position="994"/>
    </location>
</feature>
<feature type="domain" description="Myosin motor" evidence="3">
    <location>
        <begin position="12"/>
        <end position="720"/>
    </location>
</feature>
<feature type="domain" description="IQ 1" evidence="2">
    <location>
        <begin position="723"/>
        <end position="744"/>
    </location>
</feature>
<feature type="domain" description="IQ 2" evidence="2">
    <location>
        <begin position="745"/>
        <end position="774"/>
    </location>
</feature>
<feature type="domain" description="TH1" evidence="4">
    <location>
        <begin position="782"/>
        <end position="970"/>
    </location>
</feature>
<feature type="region of interest" description="Actin-binding">
    <location>
        <begin position="574"/>
        <end position="654"/>
    </location>
</feature>
<feature type="binding site" evidence="1">
    <location>
        <begin position="105"/>
        <end position="112"/>
    </location>
    <ligand>
        <name>ATP</name>
        <dbReference type="ChEBI" id="CHEBI:30616"/>
    </ligand>
</feature>
<feature type="sequence conflict" description="In Ref. 1; AAB20711." evidence="5" ref="1">
    <original>T</original>
    <variation>E</variation>
    <location>
        <position position="3"/>
    </location>
</feature>
<feature type="sequence conflict" description="In Ref. 1; AAB20711." evidence="5" ref="1">
    <original>A</original>
    <variation>G</variation>
    <location>
        <position position="152"/>
    </location>
</feature>
<feature type="sequence conflict" description="In Ref. 1; AAB20711." evidence="5" ref="1">
    <original>SSEEE</original>
    <variation>HQG</variation>
    <location>
        <begin position="212"/>
        <end position="216"/>
    </location>
</feature>
<feature type="sequence conflict" description="In Ref. 1; AAB20711." evidence="5" ref="1">
    <original>CFTA</original>
    <variation>WFSLP</variation>
    <location>
        <begin position="239"/>
        <end position="242"/>
    </location>
</feature>
<feature type="sequence conflict" description="In Ref. 1; AAB20711." evidence="5" ref="1">
    <original>EI</original>
    <variation>KS</variation>
    <location>
        <begin position="270"/>
        <end position="271"/>
    </location>
</feature>
<feature type="sequence conflict" description="In Ref. 1; AAB20711." evidence="5" ref="1">
    <original>R</original>
    <variation>S</variation>
    <location>
        <position position="582"/>
    </location>
</feature>
<feature type="sequence conflict" description="In Ref. 1; AAB20711." evidence="5" ref="1">
    <original>L</original>
    <variation>S</variation>
    <location>
        <position position="637"/>
    </location>
</feature>
<feature type="sequence conflict" description="In Ref. 1; AAB20711." evidence="5" ref="1">
    <original>ATLKR</original>
    <variation>DALPS</variation>
    <location>
        <begin position="809"/>
        <end position="813"/>
    </location>
</feature>
<feature type="sequence conflict" description="In Ref. 1; AAB20711." evidence="5" ref="1">
    <original>AVLQL</original>
    <variation>DCSSKR</variation>
    <location>
        <begin position="819"/>
        <end position="823"/>
    </location>
</feature>
<keyword id="KW-0009">Actin-binding</keyword>
<keyword id="KW-0067">ATP-binding</keyword>
<keyword id="KW-0112">Calmodulin-binding</keyword>
<keyword id="KW-0505">Motor protein</keyword>
<keyword id="KW-0518">Myosin</keyword>
<keyword id="KW-0547">Nucleotide-binding</keyword>
<keyword id="KW-1185">Reference proteome</keyword>
<keyword id="KW-0677">Repeat</keyword>
<accession>P22467</accession>
<accession>Q54VJ2</accession>
<organism>
    <name type="scientific">Dictyostelium discoideum</name>
    <name type="common">Social amoeba</name>
    <dbReference type="NCBI Taxonomy" id="44689"/>
    <lineage>
        <taxon>Eukaryota</taxon>
        <taxon>Amoebozoa</taxon>
        <taxon>Evosea</taxon>
        <taxon>Eumycetozoa</taxon>
        <taxon>Dictyostelia</taxon>
        <taxon>Dictyosteliales</taxon>
        <taxon>Dictyosteliaceae</taxon>
        <taxon>Dictyostelium</taxon>
    </lineage>
</organism>
<proteinExistence type="inferred from homology"/>